<keyword id="KW-0150">Chloroplast</keyword>
<keyword id="KW-0934">Plastid</keyword>
<keyword id="KW-0687">Ribonucleoprotein</keyword>
<keyword id="KW-0689">Ribosomal protein</keyword>
<gene>
    <name type="primary">rps2</name>
</gene>
<reference key="1">
    <citation type="journal article" date="2007" name="Proc. Natl. Acad. Sci. U.S.A.">
        <title>Analysis of 81 genes from 64 plastid genomes resolves relationships in angiosperms and identifies genome-scale evolutionary patterns.</title>
        <authorList>
            <person name="Jansen R.K."/>
            <person name="Cai Z."/>
            <person name="Raubeson L.A."/>
            <person name="Daniell H."/>
            <person name="dePamphilis C.W."/>
            <person name="Leebens-Mack J."/>
            <person name="Muller K.F."/>
            <person name="Guisinger-Bellian M."/>
            <person name="Haberle R.C."/>
            <person name="Hansen A.K."/>
            <person name="Chumley T.W."/>
            <person name="Lee S.B."/>
            <person name="Peery R."/>
            <person name="McNeal J.R."/>
            <person name="Kuehl J.V."/>
            <person name="Boore J.L."/>
        </authorList>
    </citation>
    <scope>NUCLEOTIDE SEQUENCE [GENOMIC DNA]</scope>
</reference>
<reference key="2">
    <citation type="journal article" date="2008" name="J. Mol. Evol.">
        <title>Extensive rearrangements in the chloroplast genome of Trachelium caeruleum are associated with repeats and tRNA genes.</title>
        <authorList>
            <person name="Haberle R.C."/>
            <person name="Fourcade H.M."/>
            <person name="Boore J.L."/>
            <person name="Jansen R.K."/>
        </authorList>
    </citation>
    <scope>NUCLEOTIDE SEQUENCE [LARGE SCALE GENOMIC DNA]</scope>
</reference>
<evidence type="ECO:0000305" key="1"/>
<dbReference type="EMBL" id="EU017240">
    <property type="protein sequence ID" value="ABU85649.1"/>
    <property type="molecule type" value="Genomic_DNA"/>
</dbReference>
<dbReference type="EMBL" id="EU090187">
    <property type="protein sequence ID" value="ABV26521.1"/>
    <property type="molecule type" value="Genomic_DNA"/>
</dbReference>
<dbReference type="RefSeq" id="YP_001718696.1">
    <property type="nucleotide sequence ID" value="NC_010442.1"/>
</dbReference>
<dbReference type="SMR" id="A9QC56"/>
<dbReference type="GeneID" id="6155992"/>
<dbReference type="GO" id="GO:0009507">
    <property type="term" value="C:chloroplast"/>
    <property type="evidence" value="ECO:0007669"/>
    <property type="project" value="UniProtKB-SubCell"/>
</dbReference>
<dbReference type="GO" id="GO:0005763">
    <property type="term" value="C:mitochondrial small ribosomal subunit"/>
    <property type="evidence" value="ECO:0007669"/>
    <property type="project" value="TreeGrafter"/>
</dbReference>
<dbReference type="GO" id="GO:0003735">
    <property type="term" value="F:structural constituent of ribosome"/>
    <property type="evidence" value="ECO:0007669"/>
    <property type="project" value="InterPro"/>
</dbReference>
<dbReference type="GO" id="GO:0006412">
    <property type="term" value="P:translation"/>
    <property type="evidence" value="ECO:0007669"/>
    <property type="project" value="UniProtKB-UniRule"/>
</dbReference>
<dbReference type="CDD" id="cd01425">
    <property type="entry name" value="RPS2"/>
    <property type="match status" value="1"/>
</dbReference>
<dbReference type="FunFam" id="1.10.287.610:FF:000001">
    <property type="entry name" value="30S ribosomal protein S2"/>
    <property type="match status" value="1"/>
</dbReference>
<dbReference type="Gene3D" id="3.40.50.10490">
    <property type="entry name" value="Glucose-6-phosphate isomerase like protein, domain 1"/>
    <property type="match status" value="1"/>
</dbReference>
<dbReference type="Gene3D" id="1.10.287.610">
    <property type="entry name" value="Helix hairpin bin"/>
    <property type="match status" value="1"/>
</dbReference>
<dbReference type="HAMAP" id="MF_00291_B">
    <property type="entry name" value="Ribosomal_uS2_B"/>
    <property type="match status" value="1"/>
</dbReference>
<dbReference type="InterPro" id="IPR001865">
    <property type="entry name" value="Ribosomal_uS2"/>
</dbReference>
<dbReference type="InterPro" id="IPR005706">
    <property type="entry name" value="Ribosomal_uS2_bac/mit/plastid"/>
</dbReference>
<dbReference type="InterPro" id="IPR018130">
    <property type="entry name" value="Ribosomal_uS2_CS"/>
</dbReference>
<dbReference type="InterPro" id="IPR023591">
    <property type="entry name" value="Ribosomal_uS2_flav_dom_sf"/>
</dbReference>
<dbReference type="NCBIfam" id="TIGR01011">
    <property type="entry name" value="rpsB_bact"/>
    <property type="match status" value="1"/>
</dbReference>
<dbReference type="PANTHER" id="PTHR12534">
    <property type="entry name" value="30S RIBOSOMAL PROTEIN S2 PROKARYOTIC AND ORGANELLAR"/>
    <property type="match status" value="1"/>
</dbReference>
<dbReference type="PANTHER" id="PTHR12534:SF0">
    <property type="entry name" value="SMALL RIBOSOMAL SUBUNIT PROTEIN US2M"/>
    <property type="match status" value="1"/>
</dbReference>
<dbReference type="Pfam" id="PF00318">
    <property type="entry name" value="Ribosomal_S2"/>
    <property type="match status" value="1"/>
</dbReference>
<dbReference type="PRINTS" id="PR00395">
    <property type="entry name" value="RIBOSOMALS2"/>
</dbReference>
<dbReference type="SUPFAM" id="SSF52313">
    <property type="entry name" value="Ribosomal protein S2"/>
    <property type="match status" value="1"/>
</dbReference>
<dbReference type="PROSITE" id="PS00962">
    <property type="entry name" value="RIBOSOMAL_S2_1"/>
    <property type="match status" value="1"/>
</dbReference>
<dbReference type="PROSITE" id="PS00963">
    <property type="entry name" value="RIBOSOMAL_S2_2"/>
    <property type="match status" value="1"/>
</dbReference>
<protein>
    <recommendedName>
        <fullName evidence="1">Small ribosomal subunit protein uS2c</fullName>
    </recommendedName>
    <alternativeName>
        <fullName>30S ribosomal protein S2, chloroplastic</fullName>
    </alternativeName>
</protein>
<feature type="chain" id="PRO_0000352162" description="Small ribosomal subunit protein uS2c">
    <location>
        <begin position="1"/>
        <end position="248"/>
    </location>
</feature>
<proteinExistence type="inferred from homology"/>
<geneLocation type="chloroplast"/>
<organism>
    <name type="scientific">Trachelium caeruleum</name>
    <name type="common">Blue throatwort</name>
    <dbReference type="NCBI Taxonomy" id="28494"/>
    <lineage>
        <taxon>Eukaryota</taxon>
        <taxon>Viridiplantae</taxon>
        <taxon>Streptophyta</taxon>
        <taxon>Embryophyta</taxon>
        <taxon>Tracheophyta</taxon>
        <taxon>Spermatophyta</taxon>
        <taxon>Magnoliopsida</taxon>
        <taxon>eudicotyledons</taxon>
        <taxon>Gunneridae</taxon>
        <taxon>Pentapetalae</taxon>
        <taxon>asterids</taxon>
        <taxon>campanulids</taxon>
        <taxon>Asterales</taxon>
        <taxon>Campanulaceae</taxon>
        <taxon>Trachelium</taxon>
    </lineage>
</organism>
<sequence length="248" mass="28587">MTRRYWNITLDEMMDASVHLGHDTKQWNPKMAPYIFPKCTTRKGIHLTNLFTTARFLSEACDVVFNAASRENQFLIVGTKKKAADSVLRAAIRAQCHYVNKKWLSGMLTNWSTTETRLHKFRDLRIKEKRGRLKRLPKRDAAILKRQLSHLQRSLGGIKYMTKLPDFVIIIDQQKDYTALRECIKLGIPTISLIDTNSDPDLASLSIPANDDSRSSIKFILNKLVFAIREGRYESIGNSGLKKRKRTY</sequence>
<comment type="subcellular location">
    <subcellularLocation>
        <location>Plastid</location>
        <location>Chloroplast</location>
    </subcellularLocation>
</comment>
<comment type="similarity">
    <text evidence="1">Belongs to the universal ribosomal protein uS2 family.</text>
</comment>
<name>RR2_TRACE</name>
<accession>A9QC56</accession>